<accession>Q8VHV1</accession>
<accession>A9JR49</accession>
<accession>Q8VBS8</accession>
<accession>Q9CYS9</accession>
<proteinExistence type="evidence at protein level"/>
<comment type="function">
    <text evidence="1">May play a synaptic role at the postsynaptic lipid rafts possibly through interaction with CAMK2A.</text>
</comment>
<comment type="subunit">
    <text evidence="1">Interacts with CAMK2A.</text>
</comment>
<comment type="subcellular location">
    <subcellularLocation>
        <location evidence="4">Cytoplasm</location>
    </subcellularLocation>
    <subcellularLocation>
        <location evidence="1">Synapse</location>
        <location evidence="1">Synaptosome</location>
    </subcellularLocation>
    <subcellularLocation>
        <location evidence="1">Membrane raft</location>
    </subcellularLocation>
    <subcellularLocation>
        <location evidence="1">Postsynaptic density</location>
    </subcellularLocation>
    <text evidence="1 4">In neurons, localizes to postsynaptic lipid rafts (By similarity). In myocardial and skeletal muscle cells, localizes to the cytoplasm adjacent to the inner cell membrane, polarized to one end of the myocyte (PubMed:15749074).</text>
</comment>
<comment type="alternative products">
    <event type="alternative splicing"/>
    <isoform>
        <id>Q8VHV1-1</id>
        <name>1</name>
        <name>1-6-8</name>
        <sequence type="displayed"/>
    </isoform>
    <isoform>
        <id>Q8VHV1-2</id>
        <name>2</name>
        <name>1-8</name>
        <sequence type="described" ref="VSP_020206"/>
    </isoform>
    <isoform>
        <id>Q8VHV1-3</id>
        <name>3</name>
        <sequence type="described" ref="VSP_020205"/>
    </isoform>
</comment>
<comment type="tissue specificity">
    <text evidence="3 4">At the mRNA level, predominantly expressed in the brain (PubMed:11707601). At the protein level, mainly expressed in muscle tissues. In skeletal muscles, expressed in cranial and facial muscles, muscles of the neck, back, thoracic wall, and thigh. Also found in the contractile myoepithelial cell layer of salivary glands. In smooth muscles, expressed in the gastric wall, uterus, urinary bladder, as well as in the muscular lining around seminiferous tubules, prostatic ducts, epididymis, vas deferens, walls of small blood vessels in the dermis, and fascial layers between muscle fibers, brain, and around the spinal cord. Strongly expressed in myocardium. High expression levels are observed in placental spongiotrophoblast and adjacent myometrium. Also expressed in bone marrow hematopoietic cells. In the mature thymus, expressed in rare scattered cells. Weakly expressed in the brain neuropil, particularly near the hippocampus, and spinal cord white matter. Not detected in skin keratinocytes or lung (at protein level) (PubMed:15749074).</text>
</comment>
<comment type="developmental stage">
    <text evidence="4">During embryonic development, prominently expressed in muscle tissues, including myocardium, skeletal and smooth muscles, and weakly in the developing central nervous system (only in the neuropil). At 9 dpc, expressed in the wall and trabeculae of the developing heart tube, in the caudal end of the midline dorsal aorta, and a focal area of the mesenchyme around the developing brain. Weakly expressed in marginal and ependymal layers of the early neural tube. At 11-12.5 dpc, expression persists in the myocardium. Scattered signal in the mesoderm on either side of the developing neural tube. Also found in the region of dermatomyotomes. Appears to be associated with the early pre-muscle mesoderm and later with myoblasts and myocytes of the paravertebral, back, body wall and limb muscles. At 13-15 dpc, besides the myocardium, expression is seen in the skeletal muscles of the limbs, intercostal muscles, and the diaphragm, as well as in the developing muscle layer in the wall of the few intestinal coils present in the abdominal cavity. Also found in various components of the mesenchymal precartilage forming the framework of the cranium and the face, notably, the base of the skull, frontonasal process and parts of the primitive maxillary and mandibular processes. Around 13 dpc, detected in the brain lateral ventricles and the roof of the fourth ventricle. At 15 dpc, scattered groups of positive cells are observed in the liver, around the venous sinuses. Weakly expressed in the brain and spinal cord white matter. Prominent membrane expression in the choroid plexus and meninges. At 15-18 dpc, transiently expressed in the layers of ectodermal cells covering the embryo and in immature cells of the lung buds. From 16 dpc to postnatal day 2, no change in the basic pattern of expression (at protein level).</text>
</comment>
<comment type="PTM">
    <text evidence="1">Palmitoylation and myristoylation target the protein to the lipid rafts.</text>
</comment>
<gene>
    <name type="primary">Baalc</name>
</gene>
<reference key="1">
    <citation type="journal article" date="2001" name="Proc. Natl. Acad. Sci. U.S.A.">
        <title>BAALC, the human member of a novel mammalian neuroectoderm gene lineage, is implicated in hematopoiesis and acute leukemia.</title>
        <authorList>
            <person name="Tanner S.M."/>
            <person name="Austin J.L."/>
            <person name="Leone G."/>
            <person name="Rush L.J."/>
            <person name="Plass C."/>
            <person name="Heinonen K."/>
            <person name="Mrozek K."/>
            <person name="Sill H."/>
            <person name="Knuutila S."/>
            <person name="Kolitz J.E."/>
            <person name="Archer K.J."/>
            <person name="Caligiuri M.A."/>
            <person name="Bloomfield C.D."/>
            <person name="de La Chapelle A."/>
        </authorList>
    </citation>
    <scope>NUCLEOTIDE SEQUENCE [MRNA] (ISOFORMS 1 AND 2)</scope>
    <scope>TISSUE SPECIFICITY</scope>
    <source>
        <strain>129S6/SvEvTac</strain>
    </source>
</reference>
<reference key="2">
    <citation type="journal article" date="2005" name="Science">
        <title>The transcriptional landscape of the mammalian genome.</title>
        <authorList>
            <person name="Carninci P."/>
            <person name="Kasukawa T."/>
            <person name="Katayama S."/>
            <person name="Gough J."/>
            <person name="Frith M.C."/>
            <person name="Maeda N."/>
            <person name="Oyama R."/>
            <person name="Ravasi T."/>
            <person name="Lenhard B."/>
            <person name="Wells C."/>
            <person name="Kodzius R."/>
            <person name="Shimokawa K."/>
            <person name="Bajic V.B."/>
            <person name="Brenner S.E."/>
            <person name="Batalov S."/>
            <person name="Forrest A.R."/>
            <person name="Zavolan M."/>
            <person name="Davis M.J."/>
            <person name="Wilming L.G."/>
            <person name="Aidinis V."/>
            <person name="Allen J.E."/>
            <person name="Ambesi-Impiombato A."/>
            <person name="Apweiler R."/>
            <person name="Aturaliya R.N."/>
            <person name="Bailey T.L."/>
            <person name="Bansal M."/>
            <person name="Baxter L."/>
            <person name="Beisel K.W."/>
            <person name="Bersano T."/>
            <person name="Bono H."/>
            <person name="Chalk A.M."/>
            <person name="Chiu K.P."/>
            <person name="Choudhary V."/>
            <person name="Christoffels A."/>
            <person name="Clutterbuck D.R."/>
            <person name="Crowe M.L."/>
            <person name="Dalla E."/>
            <person name="Dalrymple B.P."/>
            <person name="de Bono B."/>
            <person name="Della Gatta G."/>
            <person name="di Bernardo D."/>
            <person name="Down T."/>
            <person name="Engstrom P."/>
            <person name="Fagiolini M."/>
            <person name="Faulkner G."/>
            <person name="Fletcher C.F."/>
            <person name="Fukushima T."/>
            <person name="Furuno M."/>
            <person name="Futaki S."/>
            <person name="Gariboldi M."/>
            <person name="Georgii-Hemming P."/>
            <person name="Gingeras T.R."/>
            <person name="Gojobori T."/>
            <person name="Green R.E."/>
            <person name="Gustincich S."/>
            <person name="Harbers M."/>
            <person name="Hayashi Y."/>
            <person name="Hensch T.K."/>
            <person name="Hirokawa N."/>
            <person name="Hill D."/>
            <person name="Huminiecki L."/>
            <person name="Iacono M."/>
            <person name="Ikeo K."/>
            <person name="Iwama A."/>
            <person name="Ishikawa T."/>
            <person name="Jakt M."/>
            <person name="Kanapin A."/>
            <person name="Katoh M."/>
            <person name="Kawasawa Y."/>
            <person name="Kelso J."/>
            <person name="Kitamura H."/>
            <person name="Kitano H."/>
            <person name="Kollias G."/>
            <person name="Krishnan S.P."/>
            <person name="Kruger A."/>
            <person name="Kummerfeld S.K."/>
            <person name="Kurochkin I.V."/>
            <person name="Lareau L.F."/>
            <person name="Lazarevic D."/>
            <person name="Lipovich L."/>
            <person name="Liu J."/>
            <person name="Liuni S."/>
            <person name="McWilliam S."/>
            <person name="Madan Babu M."/>
            <person name="Madera M."/>
            <person name="Marchionni L."/>
            <person name="Matsuda H."/>
            <person name="Matsuzawa S."/>
            <person name="Miki H."/>
            <person name="Mignone F."/>
            <person name="Miyake S."/>
            <person name="Morris K."/>
            <person name="Mottagui-Tabar S."/>
            <person name="Mulder N."/>
            <person name="Nakano N."/>
            <person name="Nakauchi H."/>
            <person name="Ng P."/>
            <person name="Nilsson R."/>
            <person name="Nishiguchi S."/>
            <person name="Nishikawa S."/>
            <person name="Nori F."/>
            <person name="Ohara O."/>
            <person name="Okazaki Y."/>
            <person name="Orlando V."/>
            <person name="Pang K.C."/>
            <person name="Pavan W.J."/>
            <person name="Pavesi G."/>
            <person name="Pesole G."/>
            <person name="Petrovsky N."/>
            <person name="Piazza S."/>
            <person name="Reed J."/>
            <person name="Reid J.F."/>
            <person name="Ring B.Z."/>
            <person name="Ringwald M."/>
            <person name="Rost B."/>
            <person name="Ruan Y."/>
            <person name="Salzberg S.L."/>
            <person name="Sandelin A."/>
            <person name="Schneider C."/>
            <person name="Schoenbach C."/>
            <person name="Sekiguchi K."/>
            <person name="Semple C.A."/>
            <person name="Seno S."/>
            <person name="Sessa L."/>
            <person name="Sheng Y."/>
            <person name="Shibata Y."/>
            <person name="Shimada H."/>
            <person name="Shimada K."/>
            <person name="Silva D."/>
            <person name="Sinclair B."/>
            <person name="Sperling S."/>
            <person name="Stupka E."/>
            <person name="Sugiura K."/>
            <person name="Sultana R."/>
            <person name="Takenaka Y."/>
            <person name="Taki K."/>
            <person name="Tammoja K."/>
            <person name="Tan S.L."/>
            <person name="Tang S."/>
            <person name="Taylor M.S."/>
            <person name="Tegner J."/>
            <person name="Teichmann S.A."/>
            <person name="Ueda H.R."/>
            <person name="van Nimwegen E."/>
            <person name="Verardo R."/>
            <person name="Wei C.L."/>
            <person name="Yagi K."/>
            <person name="Yamanishi H."/>
            <person name="Zabarovsky E."/>
            <person name="Zhu S."/>
            <person name="Zimmer A."/>
            <person name="Hide W."/>
            <person name="Bult C."/>
            <person name="Grimmond S.M."/>
            <person name="Teasdale R.D."/>
            <person name="Liu E.T."/>
            <person name="Brusic V."/>
            <person name="Quackenbush J."/>
            <person name="Wahlestedt C."/>
            <person name="Mattick J.S."/>
            <person name="Hume D.A."/>
            <person name="Kai C."/>
            <person name="Sasaki D."/>
            <person name="Tomaru Y."/>
            <person name="Fukuda S."/>
            <person name="Kanamori-Katayama M."/>
            <person name="Suzuki M."/>
            <person name="Aoki J."/>
            <person name="Arakawa T."/>
            <person name="Iida J."/>
            <person name="Imamura K."/>
            <person name="Itoh M."/>
            <person name="Kato T."/>
            <person name="Kawaji H."/>
            <person name="Kawagashira N."/>
            <person name="Kawashima T."/>
            <person name="Kojima M."/>
            <person name="Kondo S."/>
            <person name="Konno H."/>
            <person name="Nakano K."/>
            <person name="Ninomiya N."/>
            <person name="Nishio T."/>
            <person name="Okada M."/>
            <person name="Plessy C."/>
            <person name="Shibata K."/>
            <person name="Shiraki T."/>
            <person name="Suzuki S."/>
            <person name="Tagami M."/>
            <person name="Waki K."/>
            <person name="Watahiki A."/>
            <person name="Okamura-Oho Y."/>
            <person name="Suzuki H."/>
            <person name="Kawai J."/>
            <person name="Hayashizaki Y."/>
        </authorList>
    </citation>
    <scope>NUCLEOTIDE SEQUENCE [LARGE SCALE MRNA] (ISOFORMS 1 AND 3)</scope>
    <source>
        <strain>C57BL/6J</strain>
        <tissue>Cerebellum</tissue>
    </source>
</reference>
<reference key="3">
    <citation type="journal article" date="2004" name="Genome Res.">
        <title>The status, quality, and expansion of the NIH full-length cDNA project: the Mammalian Gene Collection (MGC).</title>
        <authorList>
            <consortium name="The MGC Project Team"/>
        </authorList>
    </citation>
    <scope>NUCLEOTIDE SEQUENCE [LARGE SCALE MRNA] (ISOFORM 2)</scope>
</reference>
<reference key="4">
    <citation type="journal article" date="2005" name="Gene Expr. Patterns">
        <title>Baalc, a marker of mesoderm and muscle.</title>
        <authorList>
            <person name="Satoskar A.A."/>
            <person name="Tanner S.M."/>
            <person name="Weinstein M."/>
            <person name="Qualman S.J."/>
            <person name="de la Chapelle A."/>
        </authorList>
    </citation>
    <scope>SUBCELLULAR LOCATION</scope>
    <scope>TISSUE SPECIFICITY</scope>
    <scope>DEVELOPMENTAL STAGE</scope>
</reference>
<evidence type="ECO:0000250" key="1">
    <source>
        <dbReference type="UniProtKB" id="Q920K5"/>
    </source>
</evidence>
<evidence type="ECO:0000256" key="2">
    <source>
        <dbReference type="SAM" id="MobiDB-lite"/>
    </source>
</evidence>
<evidence type="ECO:0000269" key="3">
    <source>
    </source>
</evidence>
<evidence type="ECO:0000269" key="4">
    <source>
    </source>
</evidence>
<evidence type="ECO:0000303" key="5">
    <source>
    </source>
</evidence>
<evidence type="ECO:0000303" key="6">
    <source>
    </source>
</evidence>
<evidence type="ECO:0000303" key="7">
    <source>
    </source>
</evidence>
<keyword id="KW-0025">Alternative splicing</keyword>
<keyword id="KW-0963">Cytoplasm</keyword>
<keyword id="KW-0449">Lipoprotein</keyword>
<keyword id="KW-0472">Membrane</keyword>
<keyword id="KW-0519">Myristate</keyword>
<keyword id="KW-0564">Palmitate</keyword>
<keyword id="KW-1185">Reference proteome</keyword>
<keyword id="KW-0770">Synapse</keyword>
<keyword id="KW-0771">Synaptosome</keyword>
<sequence>MGCGGSRADAIEPRYYESWTRETESTWLTYTDSDALPSAAATDSGPEAGGLHAGVLEDGLSSNGVLRPAAPGGIANPEKKMNCGTQCPNSQNLSSGPLTQKQNGLWATEAKRDAKRMSAREVAINVTENIRQMDRSKRVTKNCIN</sequence>
<protein>
    <recommendedName>
        <fullName>Brain and acute leukemia cytoplasmic protein</fullName>
    </recommendedName>
</protein>
<feature type="initiator methionine" description="Removed" evidence="1">
    <location>
        <position position="1"/>
    </location>
</feature>
<feature type="chain" id="PRO_0000248206" description="Brain and acute leukemia cytoplasmic protein">
    <location>
        <begin position="2"/>
        <end position="145"/>
    </location>
</feature>
<feature type="region of interest" description="Interaction with CAMK2A" evidence="1">
    <location>
        <begin position="3"/>
        <end position="35"/>
    </location>
</feature>
<feature type="region of interest" description="Disordered" evidence="2">
    <location>
        <begin position="36"/>
        <end position="56"/>
    </location>
</feature>
<feature type="region of interest" description="Disordered" evidence="2">
    <location>
        <begin position="87"/>
        <end position="109"/>
    </location>
</feature>
<feature type="compositionally biased region" description="Polar residues" evidence="2">
    <location>
        <begin position="87"/>
        <end position="105"/>
    </location>
</feature>
<feature type="lipid moiety-binding region" description="N-myristoyl glycine" evidence="1">
    <location>
        <position position="2"/>
    </location>
</feature>
<feature type="lipid moiety-binding region" description="S-palmitoyl cysteine" evidence="1">
    <location>
        <position position="3"/>
    </location>
</feature>
<feature type="splice variant" id="VSP_020205" description="In isoform 3." evidence="7">
    <original>MGCGGSRADAIEPRYYESWTRETESTWLTYTDSDALPSAAATDSGPEAGGLHA</original>
    <variation>MPVTPVASGWLLSAHLADPFFDPWAFFSYKS</variation>
    <location>
        <begin position="1"/>
        <end position="53"/>
    </location>
</feature>
<feature type="splice variant" id="VSP_020206" description="In isoform 2." evidence="5 6">
    <location>
        <begin position="55"/>
        <end position="145"/>
    </location>
</feature>
<organism>
    <name type="scientific">Mus musculus</name>
    <name type="common">Mouse</name>
    <dbReference type="NCBI Taxonomy" id="10090"/>
    <lineage>
        <taxon>Eukaryota</taxon>
        <taxon>Metazoa</taxon>
        <taxon>Chordata</taxon>
        <taxon>Craniata</taxon>
        <taxon>Vertebrata</taxon>
        <taxon>Euteleostomi</taxon>
        <taxon>Mammalia</taxon>
        <taxon>Eutheria</taxon>
        <taxon>Euarchontoglires</taxon>
        <taxon>Glires</taxon>
        <taxon>Rodentia</taxon>
        <taxon>Myomorpha</taxon>
        <taxon>Muroidea</taxon>
        <taxon>Muridae</taxon>
        <taxon>Murinae</taxon>
        <taxon>Mus</taxon>
        <taxon>Mus</taxon>
    </lineage>
</organism>
<dbReference type="EMBL" id="AF371320">
    <property type="protein sequence ID" value="AAL50516.1"/>
    <property type="molecule type" value="mRNA"/>
</dbReference>
<dbReference type="EMBL" id="AF371324">
    <property type="protein sequence ID" value="AAL50520.1"/>
    <property type="molecule type" value="mRNA"/>
</dbReference>
<dbReference type="EMBL" id="AK013358">
    <property type="protein sequence ID" value="BAB28808.1"/>
    <property type="molecule type" value="mRNA"/>
</dbReference>
<dbReference type="EMBL" id="AK079337">
    <property type="protein sequence ID" value="BAC37611.1"/>
    <property type="molecule type" value="mRNA"/>
</dbReference>
<dbReference type="EMBL" id="BC150479">
    <property type="protein sequence ID" value="AAI50480.1"/>
    <property type="molecule type" value="mRNA"/>
</dbReference>
<dbReference type="RefSeq" id="NP_542371.1">
    <molecule id="Q8VHV1-1"/>
    <property type="nucleotide sequence ID" value="NM_080640.6"/>
</dbReference>
<dbReference type="RefSeq" id="XP_036014985.1">
    <molecule id="Q8VHV1-3"/>
    <property type="nucleotide sequence ID" value="XM_036159092.1"/>
</dbReference>
<dbReference type="RefSeq" id="XP_036014987.1">
    <molecule id="Q8VHV1-2"/>
    <property type="nucleotide sequence ID" value="XM_036159094.1"/>
</dbReference>
<dbReference type="FunCoup" id="Q8VHV1">
    <property type="interactions" value="976"/>
</dbReference>
<dbReference type="STRING" id="10090.ENSMUSP00000132788"/>
<dbReference type="GlyGen" id="Q8VHV1">
    <property type="glycosylation" value="2 sites, 2 N-linked glycans (2 sites)"/>
</dbReference>
<dbReference type="iPTMnet" id="Q8VHV1"/>
<dbReference type="PhosphoSitePlus" id="Q8VHV1"/>
<dbReference type="PaxDb" id="10090-ENSMUSP00000132788"/>
<dbReference type="ProteomicsDB" id="277099">
    <molecule id="Q8VHV1-1"/>
</dbReference>
<dbReference type="ProteomicsDB" id="277100">
    <molecule id="Q8VHV1-2"/>
</dbReference>
<dbReference type="ProteomicsDB" id="277101">
    <molecule id="Q8VHV1-3"/>
</dbReference>
<dbReference type="Antibodypedia" id="26359">
    <property type="antibodies" value="147 antibodies from 29 providers"/>
</dbReference>
<dbReference type="DNASU" id="118452"/>
<dbReference type="Ensembl" id="ENSMUST00000163313.3">
    <molecule id="Q8VHV1-3"/>
    <property type="protein sequence ID" value="ENSMUSP00000132788.2"/>
    <property type="gene ID" value="ENSMUSG00000022296.11"/>
</dbReference>
<dbReference type="Ensembl" id="ENSMUST00000226440.3">
    <molecule id="Q8VHV1-1"/>
    <property type="protein sequence ID" value="ENSMUSP00000154447.3"/>
    <property type="gene ID" value="ENSMUSG00000022296.11"/>
</dbReference>
<dbReference type="Ensembl" id="ENSMUST00000239553.1">
    <molecule id="Q8VHV1-2"/>
    <property type="protein sequence ID" value="ENSMUSP00000159442.2"/>
    <property type="gene ID" value="ENSMUSG00000022296.11"/>
</dbReference>
<dbReference type="GeneID" id="118452"/>
<dbReference type="KEGG" id="mmu:118452"/>
<dbReference type="UCSC" id="uc007vnx.2">
    <molecule id="Q8VHV1-1"/>
    <property type="organism name" value="mouse"/>
</dbReference>
<dbReference type="AGR" id="MGI:1928704"/>
<dbReference type="CTD" id="79870"/>
<dbReference type="MGI" id="MGI:1928704">
    <property type="gene designation" value="Baalc"/>
</dbReference>
<dbReference type="VEuPathDB" id="HostDB:ENSMUSG00000022296"/>
<dbReference type="eggNOG" id="KOG4119">
    <property type="taxonomic scope" value="Eukaryota"/>
</dbReference>
<dbReference type="GeneTree" id="ENSGT00390000013853"/>
<dbReference type="HOGENOM" id="CLU_164139_0_0_1"/>
<dbReference type="InParanoid" id="Q8VHV1"/>
<dbReference type="OMA" id="QNGFRTT"/>
<dbReference type="OrthoDB" id="9940597at2759"/>
<dbReference type="PhylomeDB" id="Q8VHV1"/>
<dbReference type="TreeFam" id="TF330767"/>
<dbReference type="BioGRID-ORCS" id="118452">
    <property type="hits" value="0 hits in 53 CRISPR screens"/>
</dbReference>
<dbReference type="CD-CODE" id="CE726F99">
    <property type="entry name" value="Postsynaptic density"/>
</dbReference>
<dbReference type="PRO" id="PR:Q8VHV1"/>
<dbReference type="Proteomes" id="UP000000589">
    <property type="component" value="Chromosome 15"/>
</dbReference>
<dbReference type="RNAct" id="Q8VHV1">
    <property type="molecule type" value="protein"/>
</dbReference>
<dbReference type="Bgee" id="ENSMUSG00000022296">
    <property type="expression patterns" value="Expressed in frontal cortex and 41 other cell types or tissues"/>
</dbReference>
<dbReference type="ExpressionAtlas" id="Q8VHV1">
    <property type="expression patterns" value="baseline and differential"/>
</dbReference>
<dbReference type="GO" id="GO:0005737">
    <property type="term" value="C:cytoplasm"/>
    <property type="evidence" value="ECO:0000314"/>
    <property type="project" value="MGI"/>
</dbReference>
<dbReference type="GO" id="GO:0005829">
    <property type="term" value="C:cytosol"/>
    <property type="evidence" value="ECO:0007669"/>
    <property type="project" value="Ensembl"/>
</dbReference>
<dbReference type="GO" id="GO:0045121">
    <property type="term" value="C:membrane raft"/>
    <property type="evidence" value="ECO:0007669"/>
    <property type="project" value="UniProtKB-SubCell"/>
</dbReference>
<dbReference type="GO" id="GO:0043005">
    <property type="term" value="C:neuron projection"/>
    <property type="evidence" value="ECO:0007669"/>
    <property type="project" value="UniProtKB-KW"/>
</dbReference>
<dbReference type="GO" id="GO:0005654">
    <property type="term" value="C:nucleoplasm"/>
    <property type="evidence" value="ECO:0007669"/>
    <property type="project" value="Ensembl"/>
</dbReference>
<dbReference type="GO" id="GO:0014069">
    <property type="term" value="C:postsynaptic density"/>
    <property type="evidence" value="ECO:0007669"/>
    <property type="project" value="UniProtKB-SubCell"/>
</dbReference>
<dbReference type="GO" id="GO:0016528">
    <property type="term" value="C:sarcoplasm"/>
    <property type="evidence" value="ECO:0000314"/>
    <property type="project" value="MGI"/>
</dbReference>
<dbReference type="InterPro" id="IPR009728">
    <property type="entry name" value="BAALC"/>
</dbReference>
<dbReference type="PANTHER" id="PTHR14731">
    <property type="entry name" value="BRAIN AND ACUTE LEUKEMIA CYTOPLASMIC PROTEIN"/>
    <property type="match status" value="1"/>
</dbReference>
<dbReference type="PANTHER" id="PTHR14731:SF0">
    <property type="entry name" value="BRAIN AND ACUTE LEUKEMIA CYTOPLASMIC PROTEIN"/>
    <property type="match status" value="1"/>
</dbReference>
<dbReference type="Pfam" id="PF06989">
    <property type="entry name" value="BAALC_N"/>
    <property type="match status" value="1"/>
</dbReference>
<name>BAALC_MOUSE</name>